<dbReference type="EC" id="4.1.99.17" evidence="1"/>
<dbReference type="EMBL" id="CP000151">
    <property type="protein sequence ID" value="ABB07927.1"/>
    <property type="molecule type" value="Genomic_DNA"/>
</dbReference>
<dbReference type="RefSeq" id="WP_011351497.1">
    <property type="nucleotide sequence ID" value="NC_007510.1"/>
</dbReference>
<dbReference type="SMR" id="Q39HY9"/>
<dbReference type="GeneID" id="45094233"/>
<dbReference type="KEGG" id="bur:Bcep18194_A4331"/>
<dbReference type="PATRIC" id="fig|482957.22.peg.1225"/>
<dbReference type="HOGENOM" id="CLU_013181_2_1_4"/>
<dbReference type="UniPathway" id="UPA00060"/>
<dbReference type="Proteomes" id="UP000002705">
    <property type="component" value="Chromosome 1"/>
</dbReference>
<dbReference type="GO" id="GO:0005829">
    <property type="term" value="C:cytosol"/>
    <property type="evidence" value="ECO:0007669"/>
    <property type="project" value="TreeGrafter"/>
</dbReference>
<dbReference type="GO" id="GO:0051539">
    <property type="term" value="F:4 iron, 4 sulfur cluster binding"/>
    <property type="evidence" value="ECO:0007669"/>
    <property type="project" value="UniProtKB-KW"/>
</dbReference>
<dbReference type="GO" id="GO:0016830">
    <property type="term" value="F:carbon-carbon lyase activity"/>
    <property type="evidence" value="ECO:0007669"/>
    <property type="project" value="InterPro"/>
</dbReference>
<dbReference type="GO" id="GO:0008270">
    <property type="term" value="F:zinc ion binding"/>
    <property type="evidence" value="ECO:0007669"/>
    <property type="project" value="UniProtKB-UniRule"/>
</dbReference>
<dbReference type="GO" id="GO:0009228">
    <property type="term" value="P:thiamine biosynthetic process"/>
    <property type="evidence" value="ECO:0007669"/>
    <property type="project" value="UniProtKB-KW"/>
</dbReference>
<dbReference type="GO" id="GO:0009229">
    <property type="term" value="P:thiamine diphosphate biosynthetic process"/>
    <property type="evidence" value="ECO:0007669"/>
    <property type="project" value="UniProtKB-UniRule"/>
</dbReference>
<dbReference type="FunFam" id="3.20.20.540:FF:000001">
    <property type="entry name" value="Phosphomethylpyrimidine synthase"/>
    <property type="match status" value="1"/>
</dbReference>
<dbReference type="Gene3D" id="6.10.250.620">
    <property type="match status" value="1"/>
</dbReference>
<dbReference type="Gene3D" id="3.20.20.540">
    <property type="entry name" value="Radical SAM ThiC family, central domain"/>
    <property type="match status" value="1"/>
</dbReference>
<dbReference type="HAMAP" id="MF_00089">
    <property type="entry name" value="ThiC"/>
    <property type="match status" value="1"/>
</dbReference>
<dbReference type="InterPro" id="IPR037509">
    <property type="entry name" value="ThiC"/>
</dbReference>
<dbReference type="InterPro" id="IPR025747">
    <property type="entry name" value="ThiC-associated_dom"/>
</dbReference>
<dbReference type="InterPro" id="IPR038521">
    <property type="entry name" value="ThiC/Bza_core_dom"/>
</dbReference>
<dbReference type="InterPro" id="IPR002817">
    <property type="entry name" value="ThiC/BzaA/B"/>
</dbReference>
<dbReference type="NCBIfam" id="NF006763">
    <property type="entry name" value="PRK09284.1"/>
    <property type="match status" value="1"/>
</dbReference>
<dbReference type="NCBIfam" id="NF009895">
    <property type="entry name" value="PRK13352.1"/>
    <property type="match status" value="1"/>
</dbReference>
<dbReference type="NCBIfam" id="TIGR00190">
    <property type="entry name" value="thiC"/>
    <property type="match status" value="1"/>
</dbReference>
<dbReference type="PANTHER" id="PTHR30557:SF1">
    <property type="entry name" value="PHOSPHOMETHYLPYRIMIDINE SYNTHASE, CHLOROPLASTIC"/>
    <property type="match status" value="1"/>
</dbReference>
<dbReference type="PANTHER" id="PTHR30557">
    <property type="entry name" value="THIAMINE BIOSYNTHESIS PROTEIN THIC"/>
    <property type="match status" value="1"/>
</dbReference>
<dbReference type="Pfam" id="PF13667">
    <property type="entry name" value="ThiC-associated"/>
    <property type="match status" value="1"/>
</dbReference>
<dbReference type="Pfam" id="PF01964">
    <property type="entry name" value="ThiC_Rad_SAM"/>
    <property type="match status" value="1"/>
</dbReference>
<dbReference type="SFLD" id="SFLDF00407">
    <property type="entry name" value="phosphomethylpyrimidine_syntha"/>
    <property type="match status" value="1"/>
</dbReference>
<dbReference type="SFLD" id="SFLDG01114">
    <property type="entry name" value="phosphomethylpyrimidine_syntha"/>
    <property type="match status" value="1"/>
</dbReference>
<dbReference type="SFLD" id="SFLDS00113">
    <property type="entry name" value="Radical_SAM_Phosphomethylpyrim"/>
    <property type="match status" value="1"/>
</dbReference>
<comment type="function">
    <text evidence="1">Catalyzes the synthesis of the hydroxymethylpyrimidine phosphate (HMP-P) moiety of thiamine from aminoimidazole ribotide (AIR) in a radical S-adenosyl-L-methionine (SAM)-dependent reaction.</text>
</comment>
<comment type="catalytic activity">
    <reaction evidence="1">
        <text>5-amino-1-(5-phospho-beta-D-ribosyl)imidazole + S-adenosyl-L-methionine = 4-amino-2-methyl-5-(phosphooxymethyl)pyrimidine + CO + 5'-deoxyadenosine + formate + L-methionine + 3 H(+)</text>
        <dbReference type="Rhea" id="RHEA:24840"/>
        <dbReference type="ChEBI" id="CHEBI:15378"/>
        <dbReference type="ChEBI" id="CHEBI:15740"/>
        <dbReference type="ChEBI" id="CHEBI:17245"/>
        <dbReference type="ChEBI" id="CHEBI:17319"/>
        <dbReference type="ChEBI" id="CHEBI:57844"/>
        <dbReference type="ChEBI" id="CHEBI:58354"/>
        <dbReference type="ChEBI" id="CHEBI:59789"/>
        <dbReference type="ChEBI" id="CHEBI:137981"/>
        <dbReference type="EC" id="4.1.99.17"/>
    </reaction>
</comment>
<comment type="cofactor">
    <cofactor evidence="1">
        <name>[4Fe-4S] cluster</name>
        <dbReference type="ChEBI" id="CHEBI:49883"/>
    </cofactor>
    <text evidence="1">Binds 1 [4Fe-4S] cluster per subunit. The cluster is coordinated with 3 cysteines and an exchangeable S-adenosyl-L-methionine.</text>
</comment>
<comment type="pathway">
    <text evidence="1">Cofactor biosynthesis; thiamine diphosphate biosynthesis.</text>
</comment>
<comment type="subunit">
    <text evidence="1">Homodimer.</text>
</comment>
<comment type="similarity">
    <text evidence="1">Belongs to the ThiC family.</text>
</comment>
<proteinExistence type="inferred from homology"/>
<feature type="chain" id="PRO_0000242248" description="Phosphomethylpyrimidine synthase">
    <location>
        <begin position="1"/>
        <end position="643"/>
    </location>
</feature>
<feature type="binding site" evidence="1">
    <location>
        <position position="248"/>
    </location>
    <ligand>
        <name>substrate</name>
    </ligand>
</feature>
<feature type="binding site" evidence="1">
    <location>
        <position position="277"/>
    </location>
    <ligand>
        <name>substrate</name>
    </ligand>
</feature>
<feature type="binding site" evidence="1">
    <location>
        <position position="306"/>
    </location>
    <ligand>
        <name>substrate</name>
    </ligand>
</feature>
<feature type="binding site" evidence="1">
    <location>
        <position position="342"/>
    </location>
    <ligand>
        <name>substrate</name>
    </ligand>
</feature>
<feature type="binding site" evidence="1">
    <location>
        <begin position="362"/>
        <end position="364"/>
    </location>
    <ligand>
        <name>substrate</name>
    </ligand>
</feature>
<feature type="binding site" evidence="1">
    <location>
        <begin position="403"/>
        <end position="406"/>
    </location>
    <ligand>
        <name>substrate</name>
    </ligand>
</feature>
<feature type="binding site" evidence="1">
    <location>
        <position position="442"/>
    </location>
    <ligand>
        <name>substrate</name>
    </ligand>
</feature>
<feature type="binding site" evidence="1">
    <location>
        <position position="446"/>
    </location>
    <ligand>
        <name>Zn(2+)</name>
        <dbReference type="ChEBI" id="CHEBI:29105"/>
    </ligand>
</feature>
<feature type="binding site" evidence="1">
    <location>
        <position position="469"/>
    </location>
    <ligand>
        <name>substrate</name>
    </ligand>
</feature>
<feature type="binding site" evidence="1">
    <location>
        <position position="510"/>
    </location>
    <ligand>
        <name>Zn(2+)</name>
        <dbReference type="ChEBI" id="CHEBI:29105"/>
    </ligand>
</feature>
<feature type="binding site" evidence="1">
    <location>
        <position position="590"/>
    </location>
    <ligand>
        <name>[4Fe-4S] cluster</name>
        <dbReference type="ChEBI" id="CHEBI:49883"/>
        <note>4Fe-4S-S-AdoMet</note>
    </ligand>
</feature>
<feature type="binding site" evidence="1">
    <location>
        <position position="593"/>
    </location>
    <ligand>
        <name>[4Fe-4S] cluster</name>
        <dbReference type="ChEBI" id="CHEBI:49883"/>
        <note>4Fe-4S-S-AdoMet</note>
    </ligand>
</feature>
<feature type="binding site" evidence="1">
    <location>
        <position position="598"/>
    </location>
    <ligand>
        <name>[4Fe-4S] cluster</name>
        <dbReference type="ChEBI" id="CHEBI:49883"/>
        <note>4Fe-4S-S-AdoMet</note>
    </ligand>
</feature>
<gene>
    <name evidence="1" type="primary">thiC</name>
    <name type="ordered locus">Bcep18194_A4331</name>
</gene>
<keyword id="KW-0004">4Fe-4S</keyword>
<keyword id="KW-0408">Iron</keyword>
<keyword id="KW-0411">Iron-sulfur</keyword>
<keyword id="KW-0456">Lyase</keyword>
<keyword id="KW-0479">Metal-binding</keyword>
<keyword id="KW-0949">S-adenosyl-L-methionine</keyword>
<keyword id="KW-0784">Thiamine biosynthesis</keyword>
<keyword id="KW-0862">Zinc</keyword>
<organism>
    <name type="scientific">Burkholderia lata (strain ATCC 17760 / DSM 23089 / LMG 22485 / NCIMB 9086 / R18194 / 383)</name>
    <dbReference type="NCBI Taxonomy" id="482957"/>
    <lineage>
        <taxon>Bacteria</taxon>
        <taxon>Pseudomonadati</taxon>
        <taxon>Pseudomonadota</taxon>
        <taxon>Betaproteobacteria</taxon>
        <taxon>Burkholderiales</taxon>
        <taxon>Burkholderiaceae</taxon>
        <taxon>Burkholderia</taxon>
        <taxon>Burkholderia cepacia complex</taxon>
    </lineage>
</organism>
<accession>Q39HY9</accession>
<reference key="1">
    <citation type="submission" date="2005-10" db="EMBL/GenBank/DDBJ databases">
        <title>Complete sequence of chromosome 1 of Burkholderia sp. 383.</title>
        <authorList>
            <consortium name="US DOE Joint Genome Institute"/>
            <person name="Copeland A."/>
            <person name="Lucas S."/>
            <person name="Lapidus A."/>
            <person name="Barry K."/>
            <person name="Detter J.C."/>
            <person name="Glavina T."/>
            <person name="Hammon N."/>
            <person name="Israni S."/>
            <person name="Pitluck S."/>
            <person name="Chain P."/>
            <person name="Malfatti S."/>
            <person name="Shin M."/>
            <person name="Vergez L."/>
            <person name="Schmutz J."/>
            <person name="Larimer F."/>
            <person name="Land M."/>
            <person name="Kyrpides N."/>
            <person name="Lykidis A."/>
            <person name="Richardson P."/>
        </authorList>
    </citation>
    <scope>NUCLEOTIDE SEQUENCE [LARGE SCALE GENOMIC DNA]</scope>
    <source>
        <strain>ATCC 17760 / DSM 23089 / LMG 22485 / NCIMB 9086 / R18194 / 383</strain>
    </source>
</reference>
<name>THIC_BURL3</name>
<protein>
    <recommendedName>
        <fullName evidence="1">Phosphomethylpyrimidine synthase</fullName>
        <ecNumber evidence="1">4.1.99.17</ecNumber>
    </recommendedName>
    <alternativeName>
        <fullName evidence="1">Hydroxymethylpyrimidine phosphate synthase</fullName>
        <shortName evidence="1">HMP-P synthase</shortName>
        <shortName evidence="1">HMP-phosphate synthase</shortName>
        <shortName evidence="1">HMPP synthase</shortName>
    </alternativeName>
    <alternativeName>
        <fullName evidence="1">Thiamine biosynthesis protein ThiC</fullName>
    </alternativeName>
</protein>
<evidence type="ECO:0000255" key="1">
    <source>
        <dbReference type="HAMAP-Rule" id="MF_00089"/>
    </source>
</evidence>
<sequence length="643" mass="70784">MNANPKFLSADAHVDAAAVAPLPNSRKVYVTGSQPDIRVPMREITQADTPTGFGGEKNPPIYVYDTSGPYTDPEAKIDIRAGLAALRQGWIDARGDTEVLGGLSSEYGLERAADPATADLRFPGLHRNPRRAQAGKNVSQMHYARQGIITPEMEYIAIRENQRRAEYLESLKASGPNGAKLAAMMGRQHPGQAFGAAAFGANAPAEITPEFVRSEVACGRAIIPANINHPESEPMIIGRNFLVKINANIGNSAVTSSIGEEVDKMTWAIRWGGDTVMDLSTGKHIHETREWIIRNSPVPIGTVPIYQALEKVNGKAEDLTWEIFRDTLIEQAEQGVDYFTIHAGVRLQYVPLTANRMTGIVSRGGSIMAKWCLAHHKESFLYEHFEEICEIMKAYDVSFSLGDGLRPGSIYDANDEAQLGELKTLGELTQIAWKHDVQVMIEGPGHVPMQLIKENMDLQLDWCKEAPFYTLGPLTTDIAPGYDHITSGIGAAMIGWFGTAMLCYVTPKEHLGLPNKDDVKEGIITYKLAAHAADLAKGHPGAQVRDNALSKARFEFRWEDQFNIGLDPDKAREFHDETLPKDSAKVAHFCSMCGPHFCSMKITQDVREFAAQQGVSETEALKKGMEVKAVEFVKTGAEIYHRQ</sequence>